<feature type="chain" id="PRO_0000418949" description="Exo-alpha-bergamotene synthase">
    <location>
        <begin position="1"/>
        <end position="538"/>
    </location>
</feature>
<feature type="short sequence motif" description="DDXXD motif">
    <location>
        <begin position="291"/>
        <end position="295"/>
    </location>
</feature>
<feature type="binding site" evidence="1">
    <location>
        <position position="291"/>
    </location>
    <ligand>
        <name>Mg(2+)</name>
        <dbReference type="ChEBI" id="CHEBI:18420"/>
        <label>1</label>
    </ligand>
</feature>
<feature type="binding site" evidence="1">
    <location>
        <position position="291"/>
    </location>
    <ligand>
        <name>Mg(2+)</name>
        <dbReference type="ChEBI" id="CHEBI:18420"/>
        <label>2</label>
    </ligand>
</feature>
<feature type="binding site" evidence="1">
    <location>
        <position position="295"/>
    </location>
    <ligand>
        <name>Mg(2+)</name>
        <dbReference type="ChEBI" id="CHEBI:18420"/>
        <label>1</label>
    </ligand>
</feature>
<feature type="binding site" evidence="1">
    <location>
        <position position="295"/>
    </location>
    <ligand>
        <name>Mg(2+)</name>
        <dbReference type="ChEBI" id="CHEBI:18420"/>
        <label>2</label>
    </ligand>
</feature>
<feature type="binding site" evidence="1">
    <location>
        <position position="435"/>
    </location>
    <ligand>
        <name>Mg(2+)</name>
        <dbReference type="ChEBI" id="CHEBI:18420"/>
        <label>3</label>
    </ligand>
</feature>
<feature type="binding site" evidence="1">
    <location>
        <position position="439"/>
    </location>
    <ligand>
        <name>Mg(2+)</name>
        <dbReference type="ChEBI" id="CHEBI:18420"/>
        <label>3</label>
    </ligand>
</feature>
<feature type="binding site" evidence="1">
    <location>
        <position position="443"/>
    </location>
    <ligand>
        <name>Mg(2+)</name>
        <dbReference type="ChEBI" id="CHEBI:18420"/>
        <label>3</label>
    </ligand>
</feature>
<proteinExistence type="evidence at protein level"/>
<reference key="1">
    <citation type="journal article" date="2007" name="Arch. Biochem. Biophys.">
        <title>Cloning and functional characterization of three terpene synthases from lavender (Lavandula angustifolia).</title>
        <authorList>
            <person name="Landmann C."/>
            <person name="Fink B."/>
            <person name="Festner M."/>
            <person name="Dregus M."/>
            <person name="Engel K.H."/>
            <person name="Schwab W."/>
        </authorList>
    </citation>
    <scope>NUCLEOTIDE SEQUENCE [MRNA]</scope>
    <scope>FUNCTION</scope>
    <scope>CATALYTIC ACTIVITY</scope>
    <scope>BIOPHYSICOCHEMICAL PROPERTIES</scope>
</reference>
<accession>Q2XSC4</accession>
<name>LABER_LAVAN</name>
<protein>
    <recommendedName>
        <fullName>Exo-alpha-bergamotene synthase</fullName>
        <shortName>LaBERS</shortName>
        <ecNumber>4.2.3.81</ecNumber>
    </recommendedName>
    <alternativeName>
        <fullName>Trans-alpha-bergamotene synthase</fullName>
    </alternativeName>
</protein>
<evidence type="ECO:0000250" key="1"/>
<evidence type="ECO:0000269" key="2">
    <source>
    </source>
</evidence>
<evidence type="ECO:0000305" key="3"/>
<organism>
    <name type="scientific">Lavandula angustifolia</name>
    <name type="common">Lavender</name>
    <dbReference type="NCBI Taxonomy" id="39329"/>
    <lineage>
        <taxon>Eukaryota</taxon>
        <taxon>Viridiplantae</taxon>
        <taxon>Streptophyta</taxon>
        <taxon>Embryophyta</taxon>
        <taxon>Tracheophyta</taxon>
        <taxon>Spermatophyta</taxon>
        <taxon>Magnoliopsida</taxon>
        <taxon>eudicotyledons</taxon>
        <taxon>Gunneridae</taxon>
        <taxon>Pentapetalae</taxon>
        <taxon>asterids</taxon>
        <taxon>lamiids</taxon>
        <taxon>Lamiales</taxon>
        <taxon>Lamiaceae</taxon>
        <taxon>Nepetoideae</taxon>
        <taxon>Ocimeae</taxon>
        <taxon>Lavandulinae</taxon>
        <taxon>Lavandula</taxon>
    </lineage>
</organism>
<comment type="function">
    <text evidence="2">Catalyzes a mixture of sesquiterpenoids from (2E,6E)-farnesyl diphosphate. Catalyzes the formation of exo-alpha-bergamotene, as well as (E)-nerolidol, (Z)-alpha-bisabolene, (E)-beta-farnesene and beta-sesquiphellandrene. Also has activity towards geranyl diphosphate, but to a much lesser extent.</text>
</comment>
<comment type="catalytic activity">
    <reaction evidence="2">
        <text>(2E,6E)-farnesyl diphosphate = (1S,5S,6R)-alpha-bergamotene + diphosphate</text>
        <dbReference type="Rhea" id="RHEA:31427"/>
        <dbReference type="ChEBI" id="CHEBI:33019"/>
        <dbReference type="ChEBI" id="CHEBI:62756"/>
        <dbReference type="ChEBI" id="CHEBI:175763"/>
        <dbReference type="EC" id="4.2.3.81"/>
    </reaction>
</comment>
<comment type="cofactor">
    <cofactor evidence="1">
        <name>Mg(2+)</name>
        <dbReference type="ChEBI" id="CHEBI:18420"/>
    </cofactor>
    <cofactor evidence="1">
        <name>Mn(2+)</name>
        <dbReference type="ChEBI" id="CHEBI:29035"/>
    </cofactor>
    <text evidence="1">Binds 3 Mg(2+) or Mn(2+) ions per subunit.</text>
</comment>
<comment type="biophysicochemical properties">
    <kinetics>
        <KM evidence="2">4.7 uM for (2E,6E)-farnesyl diphosphate</KM>
        <KM evidence="2">3.3 uM for geranyl diphosphate</KM>
        <text>kcat is 0.033 sec(-1) with (2E,6E)-farnesyl diphosphate as substrate. kcat is 0.00026 sec(-1) with geranyl diphosphate as substrate.</text>
    </kinetics>
    <phDependence>
        <text evidence="2">Optimum pH is 8.0.</text>
    </phDependence>
</comment>
<comment type="similarity">
    <text evidence="3">Belongs to the terpene synthase family.</text>
</comment>
<dbReference type="EC" id="4.2.3.81"/>
<dbReference type="EMBL" id="DQ263742">
    <property type="protein sequence ID" value="ABB73046.1"/>
    <property type="molecule type" value="mRNA"/>
</dbReference>
<dbReference type="SMR" id="Q2XSC4"/>
<dbReference type="KEGG" id="ag:ABB73046"/>
<dbReference type="BioCyc" id="MetaCyc:MONOMER-14818"/>
<dbReference type="BRENDA" id="4.2.3.81">
    <property type="organism ID" value="9723"/>
</dbReference>
<dbReference type="GO" id="GO:0000287">
    <property type="term" value="F:magnesium ion binding"/>
    <property type="evidence" value="ECO:0007669"/>
    <property type="project" value="InterPro"/>
</dbReference>
<dbReference type="GO" id="GO:0010333">
    <property type="term" value="F:terpene synthase activity"/>
    <property type="evidence" value="ECO:0007669"/>
    <property type="project" value="InterPro"/>
</dbReference>
<dbReference type="GO" id="GO:0016102">
    <property type="term" value="P:diterpenoid biosynthetic process"/>
    <property type="evidence" value="ECO:0007669"/>
    <property type="project" value="InterPro"/>
</dbReference>
<dbReference type="GO" id="GO:0046246">
    <property type="term" value="P:terpene biosynthetic process"/>
    <property type="evidence" value="ECO:0007669"/>
    <property type="project" value="UniProtKB-ARBA"/>
</dbReference>
<dbReference type="CDD" id="cd00684">
    <property type="entry name" value="Terpene_cyclase_plant_C1"/>
    <property type="match status" value="1"/>
</dbReference>
<dbReference type="FunFam" id="1.10.600.10:FF:000007">
    <property type="entry name" value="Isoprene synthase, chloroplastic"/>
    <property type="match status" value="1"/>
</dbReference>
<dbReference type="FunFam" id="1.50.10.130:FF:000001">
    <property type="entry name" value="Isoprene synthase, chloroplastic"/>
    <property type="match status" value="1"/>
</dbReference>
<dbReference type="Gene3D" id="1.10.600.10">
    <property type="entry name" value="Farnesyl Diphosphate Synthase"/>
    <property type="match status" value="1"/>
</dbReference>
<dbReference type="Gene3D" id="1.50.10.130">
    <property type="entry name" value="Terpene synthase, N-terminal domain"/>
    <property type="match status" value="1"/>
</dbReference>
<dbReference type="InterPro" id="IPR008949">
    <property type="entry name" value="Isoprenoid_synthase_dom_sf"/>
</dbReference>
<dbReference type="InterPro" id="IPR034741">
    <property type="entry name" value="Terpene_cyclase-like_1_C"/>
</dbReference>
<dbReference type="InterPro" id="IPR044814">
    <property type="entry name" value="Terpene_cyclase_plant_C1"/>
</dbReference>
<dbReference type="InterPro" id="IPR001906">
    <property type="entry name" value="Terpene_synth_N"/>
</dbReference>
<dbReference type="InterPro" id="IPR036965">
    <property type="entry name" value="Terpene_synth_N_sf"/>
</dbReference>
<dbReference type="InterPro" id="IPR050148">
    <property type="entry name" value="Terpene_synthase-like"/>
</dbReference>
<dbReference type="InterPro" id="IPR005630">
    <property type="entry name" value="Terpene_synthase_metal-bd"/>
</dbReference>
<dbReference type="InterPro" id="IPR008930">
    <property type="entry name" value="Terpenoid_cyclase/PrenylTrfase"/>
</dbReference>
<dbReference type="PANTHER" id="PTHR31225:SF256">
    <property type="entry name" value="(-)-ALPHA-TERPINEOL SYNTHASE-LIKE"/>
    <property type="match status" value="1"/>
</dbReference>
<dbReference type="PANTHER" id="PTHR31225">
    <property type="entry name" value="OS04G0344100 PROTEIN-RELATED"/>
    <property type="match status" value="1"/>
</dbReference>
<dbReference type="Pfam" id="PF01397">
    <property type="entry name" value="Terpene_synth"/>
    <property type="match status" value="1"/>
</dbReference>
<dbReference type="Pfam" id="PF03936">
    <property type="entry name" value="Terpene_synth_C"/>
    <property type="match status" value="1"/>
</dbReference>
<dbReference type="SFLD" id="SFLDS00005">
    <property type="entry name" value="Isoprenoid_Synthase_Type_I"/>
    <property type="match status" value="1"/>
</dbReference>
<dbReference type="SFLD" id="SFLDG01019">
    <property type="entry name" value="Terpene_Cyclase_Like_1_C_Termi"/>
    <property type="match status" value="1"/>
</dbReference>
<dbReference type="SUPFAM" id="SSF48239">
    <property type="entry name" value="Terpenoid cyclases/Protein prenyltransferases"/>
    <property type="match status" value="1"/>
</dbReference>
<dbReference type="SUPFAM" id="SSF48576">
    <property type="entry name" value="Terpenoid synthases"/>
    <property type="match status" value="1"/>
</dbReference>
<keyword id="KW-0456">Lyase</keyword>
<keyword id="KW-0460">Magnesium</keyword>
<keyword id="KW-0464">Manganese</keyword>
<keyword id="KW-0479">Metal-binding</keyword>
<sequence>MEARRSGNFESSIWDDDYIQSLTSSYTGKMYVDKSEKLKIEVKMMMDEATDELEQLELINDLQRLGISYHFKDGIAKMLNNIYKSDSKYMEKDLHLTALKFRLLRQHGYRVPQDVFSSFMDDEGNFEAWVVEDVSVLVSLYEASHISVEGESILDMAKDFSSHHLTEMVEQIGEACLAEQVKRTLELPLHWRVGRLEARWFVQAYETRPNSNPTLVELAKLDFNMVQAKYQDELKRCSRWYEETGLPEKMSFARHRLAECFLWSLGFIPDPHHGYSREIMTKIAVLITITDDIYDIYGALEELQEFTEAFERWDINSLDLLPEYMQICFLAIFNSANELGYQILRDQGLNIIPNLKRSWAELSRAYYLEARWFHNGFVPTTDQYLNTAWISISGPLLLSYGYLTTTNPINNKELKSLEKHPSIIRWPSMVLRLADDLGTSSEEIKRGDVSKSIQCYMNETGCCEGDARHHVKSLIEVALKRMNDEILMEKPFKSFDTNAMNLARISLCFYQYGDGFGKPHSDTIKNLVSLIVLPFHMP</sequence>